<gene>
    <name evidence="1" type="primary">pyrG</name>
    <name type="ordered locus">Mpop_5202</name>
</gene>
<protein>
    <recommendedName>
        <fullName evidence="1">CTP synthase</fullName>
        <ecNumber evidence="1">6.3.4.2</ecNumber>
    </recommendedName>
    <alternativeName>
        <fullName evidence="1">Cytidine 5'-triphosphate synthase</fullName>
    </alternativeName>
    <alternativeName>
        <fullName evidence="1">Cytidine triphosphate synthetase</fullName>
        <shortName evidence="1">CTP synthetase</shortName>
        <shortName evidence="1">CTPS</shortName>
    </alternativeName>
    <alternativeName>
        <fullName evidence="1">UTP--ammonia ligase</fullName>
    </alternativeName>
</protein>
<name>PYRG_METPB</name>
<evidence type="ECO:0000255" key="1">
    <source>
        <dbReference type="HAMAP-Rule" id="MF_01227"/>
    </source>
</evidence>
<proteinExistence type="inferred from homology"/>
<dbReference type="EC" id="6.3.4.2" evidence="1"/>
<dbReference type="EMBL" id="CP001029">
    <property type="protein sequence ID" value="ACB83296.1"/>
    <property type="molecule type" value="Genomic_DNA"/>
</dbReference>
<dbReference type="RefSeq" id="WP_012456892.1">
    <property type="nucleotide sequence ID" value="NC_010725.1"/>
</dbReference>
<dbReference type="SMR" id="B1Z9R0"/>
<dbReference type="STRING" id="441620.Mpop_5202"/>
<dbReference type="MEROPS" id="C26.964"/>
<dbReference type="KEGG" id="mpo:Mpop_5202"/>
<dbReference type="eggNOG" id="COG0504">
    <property type="taxonomic scope" value="Bacteria"/>
</dbReference>
<dbReference type="HOGENOM" id="CLU_011675_5_0_5"/>
<dbReference type="OrthoDB" id="9801107at2"/>
<dbReference type="UniPathway" id="UPA00159">
    <property type="reaction ID" value="UER00277"/>
</dbReference>
<dbReference type="Proteomes" id="UP000007136">
    <property type="component" value="Chromosome"/>
</dbReference>
<dbReference type="GO" id="GO:0005829">
    <property type="term" value="C:cytosol"/>
    <property type="evidence" value="ECO:0007669"/>
    <property type="project" value="TreeGrafter"/>
</dbReference>
<dbReference type="GO" id="GO:0005524">
    <property type="term" value="F:ATP binding"/>
    <property type="evidence" value="ECO:0007669"/>
    <property type="project" value="UniProtKB-KW"/>
</dbReference>
<dbReference type="GO" id="GO:0003883">
    <property type="term" value="F:CTP synthase activity"/>
    <property type="evidence" value="ECO:0007669"/>
    <property type="project" value="UniProtKB-UniRule"/>
</dbReference>
<dbReference type="GO" id="GO:0004359">
    <property type="term" value="F:glutaminase activity"/>
    <property type="evidence" value="ECO:0007669"/>
    <property type="project" value="RHEA"/>
</dbReference>
<dbReference type="GO" id="GO:0042802">
    <property type="term" value="F:identical protein binding"/>
    <property type="evidence" value="ECO:0007669"/>
    <property type="project" value="TreeGrafter"/>
</dbReference>
<dbReference type="GO" id="GO:0046872">
    <property type="term" value="F:metal ion binding"/>
    <property type="evidence" value="ECO:0007669"/>
    <property type="project" value="UniProtKB-KW"/>
</dbReference>
<dbReference type="GO" id="GO:0044210">
    <property type="term" value="P:'de novo' CTP biosynthetic process"/>
    <property type="evidence" value="ECO:0007669"/>
    <property type="project" value="UniProtKB-UniRule"/>
</dbReference>
<dbReference type="GO" id="GO:0019856">
    <property type="term" value="P:pyrimidine nucleobase biosynthetic process"/>
    <property type="evidence" value="ECO:0007669"/>
    <property type="project" value="TreeGrafter"/>
</dbReference>
<dbReference type="CDD" id="cd03113">
    <property type="entry name" value="CTPS_N"/>
    <property type="match status" value="1"/>
</dbReference>
<dbReference type="CDD" id="cd01746">
    <property type="entry name" value="GATase1_CTP_Synthase"/>
    <property type="match status" value="1"/>
</dbReference>
<dbReference type="FunFam" id="3.40.50.300:FF:000009">
    <property type="entry name" value="CTP synthase"/>
    <property type="match status" value="1"/>
</dbReference>
<dbReference type="FunFam" id="3.40.50.880:FF:000002">
    <property type="entry name" value="CTP synthase"/>
    <property type="match status" value="1"/>
</dbReference>
<dbReference type="Gene3D" id="3.40.50.880">
    <property type="match status" value="1"/>
</dbReference>
<dbReference type="Gene3D" id="3.40.50.300">
    <property type="entry name" value="P-loop containing nucleotide triphosphate hydrolases"/>
    <property type="match status" value="1"/>
</dbReference>
<dbReference type="HAMAP" id="MF_01227">
    <property type="entry name" value="PyrG"/>
    <property type="match status" value="1"/>
</dbReference>
<dbReference type="InterPro" id="IPR029062">
    <property type="entry name" value="Class_I_gatase-like"/>
</dbReference>
<dbReference type="InterPro" id="IPR004468">
    <property type="entry name" value="CTP_synthase"/>
</dbReference>
<dbReference type="InterPro" id="IPR017456">
    <property type="entry name" value="CTP_synthase_N"/>
</dbReference>
<dbReference type="InterPro" id="IPR017926">
    <property type="entry name" value="GATASE"/>
</dbReference>
<dbReference type="InterPro" id="IPR033828">
    <property type="entry name" value="GATase1_CTP_Synthase"/>
</dbReference>
<dbReference type="InterPro" id="IPR027417">
    <property type="entry name" value="P-loop_NTPase"/>
</dbReference>
<dbReference type="NCBIfam" id="NF003792">
    <property type="entry name" value="PRK05380.1"/>
    <property type="match status" value="1"/>
</dbReference>
<dbReference type="NCBIfam" id="TIGR00337">
    <property type="entry name" value="PyrG"/>
    <property type="match status" value="1"/>
</dbReference>
<dbReference type="PANTHER" id="PTHR11550">
    <property type="entry name" value="CTP SYNTHASE"/>
    <property type="match status" value="1"/>
</dbReference>
<dbReference type="PANTHER" id="PTHR11550:SF0">
    <property type="entry name" value="CTP SYNTHASE-RELATED"/>
    <property type="match status" value="1"/>
</dbReference>
<dbReference type="Pfam" id="PF06418">
    <property type="entry name" value="CTP_synth_N"/>
    <property type="match status" value="1"/>
</dbReference>
<dbReference type="Pfam" id="PF00117">
    <property type="entry name" value="GATase"/>
    <property type="match status" value="1"/>
</dbReference>
<dbReference type="SUPFAM" id="SSF52317">
    <property type="entry name" value="Class I glutamine amidotransferase-like"/>
    <property type="match status" value="1"/>
</dbReference>
<dbReference type="SUPFAM" id="SSF52540">
    <property type="entry name" value="P-loop containing nucleoside triphosphate hydrolases"/>
    <property type="match status" value="1"/>
</dbReference>
<dbReference type="PROSITE" id="PS51273">
    <property type="entry name" value="GATASE_TYPE_1"/>
    <property type="match status" value="1"/>
</dbReference>
<organism>
    <name type="scientific">Methylorubrum populi (strain ATCC BAA-705 / NCIMB 13946 / BJ001)</name>
    <name type="common">Methylobacterium populi</name>
    <dbReference type="NCBI Taxonomy" id="441620"/>
    <lineage>
        <taxon>Bacteria</taxon>
        <taxon>Pseudomonadati</taxon>
        <taxon>Pseudomonadota</taxon>
        <taxon>Alphaproteobacteria</taxon>
        <taxon>Hyphomicrobiales</taxon>
        <taxon>Methylobacteriaceae</taxon>
        <taxon>Methylorubrum</taxon>
    </lineage>
</organism>
<comment type="function">
    <text evidence="1">Catalyzes the ATP-dependent amination of UTP to CTP with either L-glutamine or ammonia as the source of nitrogen. Regulates intracellular CTP levels through interactions with the four ribonucleotide triphosphates.</text>
</comment>
<comment type="catalytic activity">
    <reaction evidence="1">
        <text>UTP + L-glutamine + ATP + H2O = CTP + L-glutamate + ADP + phosphate + 2 H(+)</text>
        <dbReference type="Rhea" id="RHEA:26426"/>
        <dbReference type="ChEBI" id="CHEBI:15377"/>
        <dbReference type="ChEBI" id="CHEBI:15378"/>
        <dbReference type="ChEBI" id="CHEBI:29985"/>
        <dbReference type="ChEBI" id="CHEBI:30616"/>
        <dbReference type="ChEBI" id="CHEBI:37563"/>
        <dbReference type="ChEBI" id="CHEBI:43474"/>
        <dbReference type="ChEBI" id="CHEBI:46398"/>
        <dbReference type="ChEBI" id="CHEBI:58359"/>
        <dbReference type="ChEBI" id="CHEBI:456216"/>
        <dbReference type="EC" id="6.3.4.2"/>
    </reaction>
</comment>
<comment type="catalytic activity">
    <reaction evidence="1">
        <text>L-glutamine + H2O = L-glutamate + NH4(+)</text>
        <dbReference type="Rhea" id="RHEA:15889"/>
        <dbReference type="ChEBI" id="CHEBI:15377"/>
        <dbReference type="ChEBI" id="CHEBI:28938"/>
        <dbReference type="ChEBI" id="CHEBI:29985"/>
        <dbReference type="ChEBI" id="CHEBI:58359"/>
    </reaction>
</comment>
<comment type="catalytic activity">
    <reaction evidence="1">
        <text>UTP + NH4(+) + ATP = CTP + ADP + phosphate + 2 H(+)</text>
        <dbReference type="Rhea" id="RHEA:16597"/>
        <dbReference type="ChEBI" id="CHEBI:15378"/>
        <dbReference type="ChEBI" id="CHEBI:28938"/>
        <dbReference type="ChEBI" id="CHEBI:30616"/>
        <dbReference type="ChEBI" id="CHEBI:37563"/>
        <dbReference type="ChEBI" id="CHEBI:43474"/>
        <dbReference type="ChEBI" id="CHEBI:46398"/>
        <dbReference type="ChEBI" id="CHEBI:456216"/>
    </reaction>
</comment>
<comment type="activity regulation">
    <text evidence="1">Allosterically activated by GTP, when glutamine is the substrate; GTP has no effect on the reaction when ammonia is the substrate. The allosteric effector GTP functions by stabilizing the protein conformation that binds the tetrahedral intermediate(s) formed during glutamine hydrolysis. Inhibited by the product CTP, via allosteric rather than competitive inhibition.</text>
</comment>
<comment type="pathway">
    <text evidence="1">Pyrimidine metabolism; CTP biosynthesis via de novo pathway; CTP from UDP: step 2/2.</text>
</comment>
<comment type="subunit">
    <text evidence="1">Homotetramer.</text>
</comment>
<comment type="miscellaneous">
    <text evidence="1">CTPSs have evolved a hybrid strategy for distinguishing between UTP and CTP. The overlapping regions of the product feedback inhibitory and substrate sites recognize a common feature in both compounds, the triphosphate moiety. To differentiate isosteric substrate and product pyrimidine rings, an additional pocket far from the expected kinase/ligase catalytic site, specifically recognizes the cytosine and ribose portions of the product inhibitor.</text>
</comment>
<comment type="similarity">
    <text evidence="1">Belongs to the CTP synthase family.</text>
</comment>
<reference key="1">
    <citation type="submission" date="2008-04" db="EMBL/GenBank/DDBJ databases">
        <title>Complete sequence of chromosome of Methylobacterium populi BJ001.</title>
        <authorList>
            <consortium name="US DOE Joint Genome Institute"/>
            <person name="Copeland A."/>
            <person name="Lucas S."/>
            <person name="Lapidus A."/>
            <person name="Glavina del Rio T."/>
            <person name="Dalin E."/>
            <person name="Tice H."/>
            <person name="Bruce D."/>
            <person name="Goodwin L."/>
            <person name="Pitluck S."/>
            <person name="Chertkov O."/>
            <person name="Brettin T."/>
            <person name="Detter J.C."/>
            <person name="Han C."/>
            <person name="Kuske C.R."/>
            <person name="Schmutz J."/>
            <person name="Larimer F."/>
            <person name="Land M."/>
            <person name="Hauser L."/>
            <person name="Kyrpides N."/>
            <person name="Mikhailova N."/>
            <person name="Marx C."/>
            <person name="Richardson P."/>
        </authorList>
    </citation>
    <scope>NUCLEOTIDE SEQUENCE [LARGE SCALE GENOMIC DNA]</scope>
    <source>
        <strain>ATCC BAA-705 / NCIMB 13946 / BJ001</strain>
    </source>
</reference>
<feature type="chain" id="PRO_1000139487" description="CTP synthase">
    <location>
        <begin position="1"/>
        <end position="542"/>
    </location>
</feature>
<feature type="domain" description="Glutamine amidotransferase type-1" evidence="1">
    <location>
        <begin position="291"/>
        <end position="541"/>
    </location>
</feature>
<feature type="region of interest" description="Amidoligase domain" evidence="1">
    <location>
        <begin position="1"/>
        <end position="265"/>
    </location>
</feature>
<feature type="active site" description="Nucleophile; for glutamine hydrolysis" evidence="1">
    <location>
        <position position="380"/>
    </location>
</feature>
<feature type="active site" evidence="1">
    <location>
        <position position="514"/>
    </location>
</feature>
<feature type="active site" evidence="1">
    <location>
        <position position="516"/>
    </location>
</feature>
<feature type="binding site" evidence="1">
    <location>
        <position position="13"/>
    </location>
    <ligand>
        <name>CTP</name>
        <dbReference type="ChEBI" id="CHEBI:37563"/>
        <note>allosteric inhibitor</note>
    </ligand>
</feature>
<feature type="binding site" evidence="1">
    <location>
        <position position="13"/>
    </location>
    <ligand>
        <name>UTP</name>
        <dbReference type="ChEBI" id="CHEBI:46398"/>
    </ligand>
</feature>
<feature type="binding site" evidence="1">
    <location>
        <begin position="14"/>
        <end position="19"/>
    </location>
    <ligand>
        <name>ATP</name>
        <dbReference type="ChEBI" id="CHEBI:30616"/>
    </ligand>
</feature>
<feature type="binding site" evidence="1">
    <location>
        <position position="71"/>
    </location>
    <ligand>
        <name>ATP</name>
        <dbReference type="ChEBI" id="CHEBI:30616"/>
    </ligand>
</feature>
<feature type="binding site" evidence="1">
    <location>
        <position position="71"/>
    </location>
    <ligand>
        <name>Mg(2+)</name>
        <dbReference type="ChEBI" id="CHEBI:18420"/>
    </ligand>
</feature>
<feature type="binding site" evidence="1">
    <location>
        <position position="139"/>
    </location>
    <ligand>
        <name>Mg(2+)</name>
        <dbReference type="ChEBI" id="CHEBI:18420"/>
    </ligand>
</feature>
<feature type="binding site" evidence="1">
    <location>
        <begin position="146"/>
        <end position="148"/>
    </location>
    <ligand>
        <name>CTP</name>
        <dbReference type="ChEBI" id="CHEBI:37563"/>
        <note>allosteric inhibitor</note>
    </ligand>
</feature>
<feature type="binding site" evidence="1">
    <location>
        <begin position="186"/>
        <end position="191"/>
    </location>
    <ligand>
        <name>CTP</name>
        <dbReference type="ChEBI" id="CHEBI:37563"/>
        <note>allosteric inhibitor</note>
    </ligand>
</feature>
<feature type="binding site" evidence="1">
    <location>
        <begin position="186"/>
        <end position="191"/>
    </location>
    <ligand>
        <name>UTP</name>
        <dbReference type="ChEBI" id="CHEBI:46398"/>
    </ligand>
</feature>
<feature type="binding site" evidence="1">
    <location>
        <position position="222"/>
    </location>
    <ligand>
        <name>CTP</name>
        <dbReference type="ChEBI" id="CHEBI:37563"/>
        <note>allosteric inhibitor</note>
    </ligand>
</feature>
<feature type="binding site" evidence="1">
    <location>
        <position position="222"/>
    </location>
    <ligand>
        <name>UTP</name>
        <dbReference type="ChEBI" id="CHEBI:46398"/>
    </ligand>
</feature>
<feature type="binding site" evidence="1">
    <location>
        <begin position="238"/>
        <end position="240"/>
    </location>
    <ligand>
        <name>ATP</name>
        <dbReference type="ChEBI" id="CHEBI:30616"/>
    </ligand>
</feature>
<feature type="binding site" evidence="1">
    <location>
        <position position="353"/>
    </location>
    <ligand>
        <name>L-glutamine</name>
        <dbReference type="ChEBI" id="CHEBI:58359"/>
    </ligand>
</feature>
<feature type="binding site" evidence="1">
    <location>
        <begin position="381"/>
        <end position="384"/>
    </location>
    <ligand>
        <name>L-glutamine</name>
        <dbReference type="ChEBI" id="CHEBI:58359"/>
    </ligand>
</feature>
<feature type="binding site" evidence="1">
    <location>
        <position position="404"/>
    </location>
    <ligand>
        <name>L-glutamine</name>
        <dbReference type="ChEBI" id="CHEBI:58359"/>
    </ligand>
</feature>
<feature type="binding site" evidence="1">
    <location>
        <position position="469"/>
    </location>
    <ligand>
        <name>L-glutamine</name>
        <dbReference type="ChEBI" id="CHEBI:58359"/>
    </ligand>
</feature>
<keyword id="KW-0067">ATP-binding</keyword>
<keyword id="KW-0315">Glutamine amidotransferase</keyword>
<keyword id="KW-0436">Ligase</keyword>
<keyword id="KW-0460">Magnesium</keyword>
<keyword id="KW-0479">Metal-binding</keyword>
<keyword id="KW-0547">Nucleotide-binding</keyword>
<keyword id="KW-0665">Pyrimidine biosynthesis</keyword>
<accession>B1Z9R0</accession>
<sequence length="542" mass="60263">MTRYVFITGGVVSSLGKGLASAALAALLQARGYRVRLRKLDPYLNVDPGTMSPTQHGEVFVTDDGAETDLDLGHYERFTGLPASRADNVTTGRIYLDIITKERRGDYLGATIQVIPHVTNAIKAFVLDGNDDYDFVLVEIGGTVGDIEGLPFFEAIRQIGQERPRGSVCYLHLTLLPYIPSAGELKTKPTQHSVKELRSIGIQPDILLCRCDRPIPVDERRKLGLFCNVRESAVIEARDVDTIYAVPLSYREAGLDREILAHFQMKPEGEPKLERWQNILERVRNPEGEVTIAIVGKYTGLKDAYKSLTEALTHGGIANNVRVNLEWIEAEVFEREDPAPFLEGLHGILVPGGFGQRGAEGKIRAARYARERNIPYFGICFGMQMAVIEAARSLAGITDANSTEFGETREPVVGLLTEWMRGNELERRAAESDLGGTMRLGAYKATLAEGTKIAQMYGDTEISERHRHRYEVNMAYRECLEAKGLRFSGTSPDGLLPETVEHEGHPWFIGVQFHPELKSRPFEPHPLFKGFIAAAIEQSRLV</sequence>